<reference key="1">
    <citation type="journal article" date="2007" name="J. Bacteriol.">
        <title>Complete genome of acute rheumatic fever-associated serotype M5 Streptococcus pyogenes strain Manfredo.</title>
        <authorList>
            <person name="Holden M.T.G."/>
            <person name="Scott A."/>
            <person name="Cherevach I."/>
            <person name="Chillingworth T."/>
            <person name="Churcher C."/>
            <person name="Cronin A."/>
            <person name="Dowd L."/>
            <person name="Feltwell T."/>
            <person name="Hamlin N."/>
            <person name="Holroyd S."/>
            <person name="Jagels K."/>
            <person name="Moule S."/>
            <person name="Mungall K."/>
            <person name="Quail M.A."/>
            <person name="Price C."/>
            <person name="Rabbinowitsch E."/>
            <person name="Sharp S."/>
            <person name="Skelton J."/>
            <person name="Whitehead S."/>
            <person name="Barrell B.G."/>
            <person name="Kehoe M."/>
            <person name="Parkhill J."/>
        </authorList>
    </citation>
    <scope>NUCLEOTIDE SEQUENCE [LARGE SCALE GENOMIC DNA]</scope>
    <source>
        <strain>Manfredo</strain>
    </source>
</reference>
<proteinExistence type="inferred from homology"/>
<evidence type="ECO:0000255" key="1">
    <source>
        <dbReference type="HAMAP-Rule" id="MF_00593"/>
    </source>
</evidence>
<protein>
    <recommendedName>
        <fullName evidence="1">D-alanine--D-alanyl carrier protein ligase</fullName>
        <shortName evidence="1">DCL</shortName>
        <ecNumber evidence="1">6.2.1.54</ecNumber>
    </recommendedName>
    <alternativeName>
        <fullName evidence="1">D-alanine--poly(phosphoribitol) ligase subunit 1</fullName>
    </alternativeName>
    <alternativeName>
        <fullName evidence="1">D-alanine-activating enzyme</fullName>
        <shortName evidence="1">DAE</shortName>
    </alternativeName>
</protein>
<keyword id="KW-0067">ATP-binding</keyword>
<keyword id="KW-0963">Cytoplasm</keyword>
<keyword id="KW-0436">Ligase</keyword>
<keyword id="KW-0547">Nucleotide-binding</keyword>
<feature type="chain" id="PRO_1000025540" description="D-alanine--D-alanyl carrier protein ligase">
    <location>
        <begin position="1"/>
        <end position="512"/>
    </location>
</feature>
<feature type="binding site" evidence="1">
    <location>
        <begin position="152"/>
        <end position="153"/>
    </location>
    <ligand>
        <name>ATP</name>
        <dbReference type="ChEBI" id="CHEBI:30616"/>
    </ligand>
</feature>
<feature type="binding site" evidence="1">
    <location>
        <position position="199"/>
    </location>
    <ligand>
        <name>D-alanine</name>
        <dbReference type="ChEBI" id="CHEBI:57416"/>
    </ligand>
</feature>
<feature type="binding site" evidence="1">
    <location>
        <begin position="294"/>
        <end position="299"/>
    </location>
    <ligand>
        <name>ATP</name>
        <dbReference type="ChEBI" id="CHEBI:30616"/>
    </ligand>
</feature>
<feature type="binding site" evidence="1">
    <location>
        <position position="303"/>
    </location>
    <ligand>
        <name>D-alanine</name>
        <dbReference type="ChEBI" id="CHEBI:57416"/>
    </ligand>
</feature>
<feature type="binding site" evidence="1">
    <location>
        <position position="385"/>
    </location>
    <ligand>
        <name>ATP</name>
        <dbReference type="ChEBI" id="CHEBI:30616"/>
    </ligand>
</feature>
<feature type="binding site" evidence="1">
    <location>
        <begin position="397"/>
        <end position="400"/>
    </location>
    <ligand>
        <name>ATP</name>
        <dbReference type="ChEBI" id="CHEBI:30616"/>
    </ligand>
</feature>
<feature type="binding site" evidence="1">
    <location>
        <position position="499"/>
    </location>
    <ligand>
        <name>ATP</name>
        <dbReference type="ChEBI" id="CHEBI:30616"/>
    </ligand>
</feature>
<feature type="binding site" evidence="1">
    <location>
        <position position="499"/>
    </location>
    <ligand>
        <name>D-alanine</name>
        <dbReference type="ChEBI" id="CHEBI:57416"/>
    </ligand>
</feature>
<organism>
    <name type="scientific">Streptococcus pyogenes serotype M5 (strain Manfredo)</name>
    <dbReference type="NCBI Taxonomy" id="160491"/>
    <lineage>
        <taxon>Bacteria</taxon>
        <taxon>Bacillati</taxon>
        <taxon>Bacillota</taxon>
        <taxon>Bacilli</taxon>
        <taxon>Lactobacillales</taxon>
        <taxon>Streptococcaceae</taxon>
        <taxon>Streptococcus</taxon>
    </lineage>
</organism>
<comment type="function">
    <text evidence="1">Catalyzes the first step in the D-alanylation of lipoteichoic acid (LTA), the activation of D-alanine and its transfer onto the D-alanyl carrier protein (Dcp) DltC. In an ATP-dependent two-step reaction, forms a high energy D-alanyl-AMP intermediate, followed by transfer of the D-alanyl residue as a thiol ester to the phosphopantheinyl prosthetic group of the Dcp. D-alanylation of LTA plays an important role in modulating the properties of the cell wall in Gram-positive bacteria, influencing the net charge of the cell wall.</text>
</comment>
<comment type="catalytic activity">
    <reaction evidence="1">
        <text>holo-[D-alanyl-carrier protein] + D-alanine + ATP = D-alanyl-[D-alanyl-carrier protein] + AMP + diphosphate</text>
        <dbReference type="Rhea" id="RHEA:55132"/>
        <dbReference type="Rhea" id="RHEA-COMP:14102"/>
        <dbReference type="Rhea" id="RHEA-COMP:14103"/>
        <dbReference type="ChEBI" id="CHEBI:30616"/>
        <dbReference type="ChEBI" id="CHEBI:33019"/>
        <dbReference type="ChEBI" id="CHEBI:57416"/>
        <dbReference type="ChEBI" id="CHEBI:64479"/>
        <dbReference type="ChEBI" id="CHEBI:138620"/>
        <dbReference type="ChEBI" id="CHEBI:456215"/>
        <dbReference type="EC" id="6.2.1.54"/>
    </reaction>
</comment>
<comment type="pathway">
    <text evidence="1">Cell wall biogenesis; lipoteichoic acid biosynthesis.</text>
</comment>
<comment type="subcellular location">
    <subcellularLocation>
        <location evidence="1">Cytoplasm</location>
    </subcellularLocation>
</comment>
<comment type="similarity">
    <text evidence="1">Belongs to the ATP-dependent AMP-binding enzyme family. DltA subfamily.</text>
</comment>
<gene>
    <name evidence="1" type="primary">dltA</name>
    <name type="ordered locus">SpyM50792</name>
</gene>
<dbReference type="EC" id="6.2.1.54" evidence="1"/>
<dbReference type="EMBL" id="AM295007">
    <property type="protein sequence ID" value="CAM30120.1"/>
    <property type="molecule type" value="Genomic_DNA"/>
</dbReference>
<dbReference type="RefSeq" id="WP_002984203.1">
    <property type="nucleotide sequence ID" value="NC_009332.1"/>
</dbReference>
<dbReference type="SMR" id="A2RE45"/>
<dbReference type="KEGG" id="spf:SpyM50792"/>
<dbReference type="HOGENOM" id="CLU_000022_2_12_9"/>
<dbReference type="UniPathway" id="UPA00556"/>
<dbReference type="GO" id="GO:0005737">
    <property type="term" value="C:cytoplasm"/>
    <property type="evidence" value="ECO:0007669"/>
    <property type="project" value="UniProtKB-SubCell"/>
</dbReference>
<dbReference type="GO" id="GO:0005524">
    <property type="term" value="F:ATP binding"/>
    <property type="evidence" value="ECO:0007669"/>
    <property type="project" value="UniProtKB-KW"/>
</dbReference>
<dbReference type="GO" id="GO:0047473">
    <property type="term" value="F:D-alanine [D-alanyl carrier protein] ligase activity"/>
    <property type="evidence" value="ECO:0007669"/>
    <property type="project" value="UniProtKB-UniRule"/>
</dbReference>
<dbReference type="GO" id="GO:0070395">
    <property type="term" value="P:lipoteichoic acid biosynthetic process"/>
    <property type="evidence" value="ECO:0007669"/>
    <property type="project" value="UniProtKB-UniRule"/>
</dbReference>
<dbReference type="CDD" id="cd05945">
    <property type="entry name" value="DltA"/>
    <property type="match status" value="1"/>
</dbReference>
<dbReference type="FunFam" id="3.30.300.30:FF:000012">
    <property type="entry name" value="D-alanine--D-alanyl carrier protein ligase"/>
    <property type="match status" value="1"/>
</dbReference>
<dbReference type="Gene3D" id="3.30.300.30">
    <property type="match status" value="1"/>
</dbReference>
<dbReference type="Gene3D" id="3.40.50.12780">
    <property type="entry name" value="N-terminal domain of ligase-like"/>
    <property type="match status" value="1"/>
</dbReference>
<dbReference type="HAMAP" id="MF_00593">
    <property type="entry name" value="DltA"/>
    <property type="match status" value="1"/>
</dbReference>
<dbReference type="InterPro" id="IPR010071">
    <property type="entry name" value="AA_adenyl_dom"/>
</dbReference>
<dbReference type="InterPro" id="IPR025110">
    <property type="entry name" value="AMP-bd_C"/>
</dbReference>
<dbReference type="InterPro" id="IPR045851">
    <property type="entry name" value="AMP-bd_C_sf"/>
</dbReference>
<dbReference type="InterPro" id="IPR020845">
    <property type="entry name" value="AMP-binding_CS"/>
</dbReference>
<dbReference type="InterPro" id="IPR000873">
    <property type="entry name" value="AMP-dep_synth/lig_dom"/>
</dbReference>
<dbReference type="InterPro" id="IPR042099">
    <property type="entry name" value="ANL_N_sf"/>
</dbReference>
<dbReference type="InterPro" id="IPR010072">
    <property type="entry name" value="DltA"/>
</dbReference>
<dbReference type="InterPro" id="IPR044507">
    <property type="entry name" value="DltA-like"/>
</dbReference>
<dbReference type="NCBIfam" id="TIGR01733">
    <property type="entry name" value="AA-adenyl-dom"/>
    <property type="match status" value="1"/>
</dbReference>
<dbReference type="NCBIfam" id="TIGR01734">
    <property type="entry name" value="D-ala-DACP-lig"/>
    <property type="match status" value="1"/>
</dbReference>
<dbReference type="NCBIfam" id="NF003417">
    <property type="entry name" value="PRK04813.1"/>
    <property type="match status" value="1"/>
</dbReference>
<dbReference type="PANTHER" id="PTHR45398">
    <property type="match status" value="1"/>
</dbReference>
<dbReference type="PANTHER" id="PTHR45398:SF1">
    <property type="entry name" value="ENZYME, PUTATIVE (JCVI)-RELATED"/>
    <property type="match status" value="1"/>
</dbReference>
<dbReference type="Pfam" id="PF00501">
    <property type="entry name" value="AMP-binding"/>
    <property type="match status" value="1"/>
</dbReference>
<dbReference type="Pfam" id="PF13193">
    <property type="entry name" value="AMP-binding_C"/>
    <property type="match status" value="1"/>
</dbReference>
<dbReference type="SUPFAM" id="SSF56801">
    <property type="entry name" value="Acetyl-CoA synthetase-like"/>
    <property type="match status" value="1"/>
</dbReference>
<dbReference type="PROSITE" id="PS00455">
    <property type="entry name" value="AMP_BINDING"/>
    <property type="match status" value="1"/>
</dbReference>
<sequence>MIKDMIDSIEQFAQTQADFPVYDCLGERRTYGQLKRDSDSIAAFIDSLALLAKSPVLVFGAQTYDMLATFVALTKSGHAYIPVDVHSAPERILAIIEIAKPSLIIAIEEFPLTIEGISLVSLSEIESAKLAEMPYERTHSVKGDDNYYIIFTSGTTGQPKGVQISHDNLLSFTNWMIEDAAFDVPKQPQMLAQPPYSFDLSVMYWAPTLALGGTLFALPKELVADFKQLFTTIAQLPVGIWTSTPSFADMAMLSDDFCQAKMPALTHFYFDGEELTVSTARKLFERFPSAKIINAYGPTEATVALSAIEITREMVDNYTRLPIGYPKPDSPTYIIDEDGKELASGEQGEIIVTGPAVSKGYLNNPEKTAEAFFTFKGQPAYHTGDIGSLTEDNILLYGGRLDFQIKYAGYRIELEDVSQQLNQSPMVASAVAVPRYNKEHKVQNLLAYIVVKDGVKERFDRELELTKAIKASVKDHMMSYMMPSKFLYRDSLPLTPNGKIDIKTLINEVNNR</sequence>
<accession>A2RE45</accession>
<name>DLTA_STRPG</name>